<gene>
    <name type="primary">dsbB</name>
    <name type="synonym">roxB</name>
    <name type="ordered locus">Z1948</name>
    <name type="ordered locus">ECs1680</name>
</gene>
<accession>P0A6M3</accession>
<accession>P30018</accession>
<accession>Q47408</accession>
<keyword id="KW-0997">Cell inner membrane</keyword>
<keyword id="KW-1003">Cell membrane</keyword>
<keyword id="KW-0143">Chaperone</keyword>
<keyword id="KW-1015">Disulfide bond</keyword>
<keyword id="KW-0249">Electron transport</keyword>
<keyword id="KW-0472">Membrane</keyword>
<keyword id="KW-0560">Oxidoreductase</keyword>
<keyword id="KW-0676">Redox-active center</keyword>
<keyword id="KW-1185">Reference proteome</keyword>
<keyword id="KW-0812">Transmembrane</keyword>
<keyword id="KW-1133">Transmembrane helix</keyword>
<keyword id="KW-0813">Transport</keyword>
<sequence length="176" mass="20142">MLRFLNQCSQGRGAWLLMAFTALALELTALWFQHVMLLKPCVLCIYERCALFGVLGAALIGAIAPKTPLRYVAMVIWLYSAFRGVQLTYEHTMLQLYPSPFATCDFMVRFPEWLPLDKWVPQVFVASGDCAERQWDFLGLEMPQWLLGIFIAYLIVAVLVVISQPFKAKKRDLFGR</sequence>
<evidence type="ECO:0000250" key="1"/>
<evidence type="ECO:0000305" key="2"/>
<comment type="function">
    <text evidence="1">Required for disulfide bond formation in some periplasmic proteins such as PhoA or OmpA. Acts by oxidizing the DsbA protein (By similarity).</text>
</comment>
<comment type="subcellular location">
    <subcellularLocation>
        <location evidence="1">Cell inner membrane</location>
        <topology evidence="1">Multi-pass membrane protein</topology>
    </subcellularLocation>
</comment>
<comment type="similarity">
    <text evidence="2">Belongs to the DsbB family.</text>
</comment>
<name>DSBB_ECO57</name>
<reference key="1">
    <citation type="journal article" date="2001" name="Nature">
        <title>Genome sequence of enterohaemorrhagic Escherichia coli O157:H7.</title>
        <authorList>
            <person name="Perna N.T."/>
            <person name="Plunkett G. III"/>
            <person name="Burland V."/>
            <person name="Mau B."/>
            <person name="Glasner J.D."/>
            <person name="Rose D.J."/>
            <person name="Mayhew G.F."/>
            <person name="Evans P.S."/>
            <person name="Gregor J."/>
            <person name="Kirkpatrick H.A."/>
            <person name="Posfai G."/>
            <person name="Hackett J."/>
            <person name="Klink S."/>
            <person name="Boutin A."/>
            <person name="Shao Y."/>
            <person name="Miller L."/>
            <person name="Grotbeck E.J."/>
            <person name="Davis N.W."/>
            <person name="Lim A."/>
            <person name="Dimalanta E.T."/>
            <person name="Potamousis K."/>
            <person name="Apodaca J."/>
            <person name="Anantharaman T.S."/>
            <person name="Lin J."/>
            <person name="Yen G."/>
            <person name="Schwartz D.C."/>
            <person name="Welch R.A."/>
            <person name="Blattner F.R."/>
        </authorList>
    </citation>
    <scope>NUCLEOTIDE SEQUENCE [LARGE SCALE GENOMIC DNA]</scope>
    <source>
        <strain>O157:H7 / EDL933 / ATCC 700927 / EHEC</strain>
    </source>
</reference>
<reference key="2">
    <citation type="journal article" date="2001" name="DNA Res.">
        <title>Complete genome sequence of enterohemorrhagic Escherichia coli O157:H7 and genomic comparison with a laboratory strain K-12.</title>
        <authorList>
            <person name="Hayashi T."/>
            <person name="Makino K."/>
            <person name="Ohnishi M."/>
            <person name="Kurokawa K."/>
            <person name="Ishii K."/>
            <person name="Yokoyama K."/>
            <person name="Han C.-G."/>
            <person name="Ohtsubo E."/>
            <person name="Nakayama K."/>
            <person name="Murata T."/>
            <person name="Tanaka M."/>
            <person name="Tobe T."/>
            <person name="Iida T."/>
            <person name="Takami H."/>
            <person name="Honda T."/>
            <person name="Sasakawa C."/>
            <person name="Ogasawara N."/>
            <person name="Yasunaga T."/>
            <person name="Kuhara S."/>
            <person name="Shiba T."/>
            <person name="Hattori M."/>
            <person name="Shinagawa H."/>
        </authorList>
    </citation>
    <scope>NUCLEOTIDE SEQUENCE [LARGE SCALE GENOMIC DNA]</scope>
    <source>
        <strain>O157:H7 / Sakai / RIMD 0509952 / EHEC</strain>
    </source>
</reference>
<feature type="chain" id="PRO_0000059343" description="Disulfide bond formation protein B">
    <location>
        <begin position="1"/>
        <end position="176"/>
    </location>
</feature>
<feature type="topological domain" description="Cytoplasmic" evidence="1">
    <location>
        <begin position="1"/>
        <end position="14"/>
    </location>
</feature>
<feature type="transmembrane region" description="Helical" evidence="1">
    <location>
        <begin position="15"/>
        <end position="31"/>
    </location>
</feature>
<feature type="topological domain" description="Periplasmic" evidence="1">
    <location>
        <begin position="32"/>
        <end position="49"/>
    </location>
</feature>
<feature type="transmembrane region" description="Helical" evidence="1">
    <location>
        <begin position="50"/>
        <end position="65"/>
    </location>
</feature>
<feature type="topological domain" description="Cytoplasmic" evidence="1">
    <location>
        <begin position="66"/>
        <end position="71"/>
    </location>
</feature>
<feature type="transmembrane region" description="Helical" evidence="1">
    <location>
        <begin position="72"/>
        <end position="89"/>
    </location>
</feature>
<feature type="topological domain" description="Periplasmic" evidence="1">
    <location>
        <begin position="90"/>
        <end position="144"/>
    </location>
</feature>
<feature type="transmembrane region" description="Helical" evidence="1">
    <location>
        <begin position="145"/>
        <end position="163"/>
    </location>
</feature>
<feature type="topological domain" description="Cytoplasmic" evidence="1">
    <location>
        <begin position="164"/>
        <end position="176"/>
    </location>
</feature>
<feature type="disulfide bond" description="Redox-active" evidence="1">
    <location>
        <begin position="41"/>
        <end position="44"/>
    </location>
</feature>
<feature type="disulfide bond" description="Redox-active" evidence="1">
    <location>
        <begin position="104"/>
        <end position="130"/>
    </location>
</feature>
<proteinExistence type="inferred from homology"/>
<organism>
    <name type="scientific">Escherichia coli O157:H7</name>
    <dbReference type="NCBI Taxonomy" id="83334"/>
    <lineage>
        <taxon>Bacteria</taxon>
        <taxon>Pseudomonadati</taxon>
        <taxon>Pseudomonadota</taxon>
        <taxon>Gammaproteobacteria</taxon>
        <taxon>Enterobacterales</taxon>
        <taxon>Enterobacteriaceae</taxon>
        <taxon>Escherichia</taxon>
    </lineage>
</organism>
<dbReference type="EMBL" id="AE005174">
    <property type="protein sequence ID" value="AAG56036.1"/>
    <property type="molecule type" value="Genomic_DNA"/>
</dbReference>
<dbReference type="EMBL" id="BA000007">
    <property type="protein sequence ID" value="BAB35103.1"/>
    <property type="molecule type" value="Genomic_DNA"/>
</dbReference>
<dbReference type="PIR" id="H90838">
    <property type="entry name" value="H90838"/>
</dbReference>
<dbReference type="RefSeq" id="NP_309707.1">
    <property type="nucleotide sequence ID" value="NC_002695.1"/>
</dbReference>
<dbReference type="RefSeq" id="WP_000943459.1">
    <property type="nucleotide sequence ID" value="NZ_VOAI01000042.1"/>
</dbReference>
<dbReference type="BMRB" id="P0A6M3"/>
<dbReference type="SMR" id="P0A6M3"/>
<dbReference type="STRING" id="155864.Z1948"/>
<dbReference type="GeneID" id="75203298"/>
<dbReference type="GeneID" id="913192"/>
<dbReference type="KEGG" id="ece:Z1948"/>
<dbReference type="KEGG" id="ecs:ECs_1680"/>
<dbReference type="PATRIC" id="fig|386585.9.peg.1777"/>
<dbReference type="eggNOG" id="COG1495">
    <property type="taxonomic scope" value="Bacteria"/>
</dbReference>
<dbReference type="HOGENOM" id="CLU_098660_2_0_6"/>
<dbReference type="Proteomes" id="UP000000558">
    <property type="component" value="Chromosome"/>
</dbReference>
<dbReference type="Proteomes" id="UP000002519">
    <property type="component" value="Chromosome"/>
</dbReference>
<dbReference type="GO" id="GO:0005886">
    <property type="term" value="C:plasma membrane"/>
    <property type="evidence" value="ECO:0007669"/>
    <property type="project" value="UniProtKB-SubCell"/>
</dbReference>
<dbReference type="GO" id="GO:0009055">
    <property type="term" value="F:electron transfer activity"/>
    <property type="evidence" value="ECO:0007669"/>
    <property type="project" value="UniProtKB-UniRule"/>
</dbReference>
<dbReference type="GO" id="GO:0015035">
    <property type="term" value="F:protein-disulfide reductase activity"/>
    <property type="evidence" value="ECO:0007669"/>
    <property type="project" value="UniProtKB-UniRule"/>
</dbReference>
<dbReference type="GO" id="GO:0006457">
    <property type="term" value="P:protein folding"/>
    <property type="evidence" value="ECO:0007669"/>
    <property type="project" value="InterPro"/>
</dbReference>
<dbReference type="FunFam" id="1.20.1550.10:FF:000001">
    <property type="entry name" value="Disulfide bond formation protein B"/>
    <property type="match status" value="1"/>
</dbReference>
<dbReference type="Gene3D" id="1.20.1550.10">
    <property type="entry name" value="DsbB-like"/>
    <property type="match status" value="1"/>
</dbReference>
<dbReference type="HAMAP" id="MF_00286">
    <property type="entry name" value="DsbB"/>
    <property type="match status" value="1"/>
</dbReference>
<dbReference type="InterPro" id="IPR003752">
    <property type="entry name" value="DiS_bond_form_DsbB/BdbC"/>
</dbReference>
<dbReference type="InterPro" id="IPR022920">
    <property type="entry name" value="Disulphide_bond_form_DsbB"/>
</dbReference>
<dbReference type="InterPro" id="IPR050183">
    <property type="entry name" value="DsbB"/>
</dbReference>
<dbReference type="InterPro" id="IPR023380">
    <property type="entry name" value="DsbB-like_sf"/>
</dbReference>
<dbReference type="NCBIfam" id="NF002485">
    <property type="entry name" value="PRK01749.1"/>
    <property type="match status" value="1"/>
</dbReference>
<dbReference type="PANTHER" id="PTHR36570">
    <property type="entry name" value="DISULFIDE BOND FORMATION PROTEIN B"/>
    <property type="match status" value="1"/>
</dbReference>
<dbReference type="PANTHER" id="PTHR36570:SF2">
    <property type="entry name" value="DISULFIDE BOND FORMATION PROTEIN B"/>
    <property type="match status" value="1"/>
</dbReference>
<dbReference type="Pfam" id="PF02600">
    <property type="entry name" value="DsbB"/>
    <property type="match status" value="1"/>
</dbReference>
<dbReference type="SUPFAM" id="SSF158442">
    <property type="entry name" value="DsbB-like"/>
    <property type="match status" value="1"/>
</dbReference>
<protein>
    <recommendedName>
        <fullName>Disulfide bond formation protein B</fullName>
    </recommendedName>
    <alternativeName>
        <fullName>Disulfide oxidoreductase</fullName>
    </alternativeName>
</protein>